<name>MEC10_CAEEL</name>
<organism>
    <name type="scientific">Caenorhabditis elegans</name>
    <dbReference type="NCBI Taxonomy" id="6239"/>
    <lineage>
        <taxon>Eukaryota</taxon>
        <taxon>Metazoa</taxon>
        <taxon>Ecdysozoa</taxon>
        <taxon>Nematoda</taxon>
        <taxon>Chromadorea</taxon>
        <taxon>Rhabditida</taxon>
        <taxon>Rhabditina</taxon>
        <taxon>Rhabditomorpha</taxon>
        <taxon>Rhabditoidea</taxon>
        <taxon>Rhabditidae</taxon>
        <taxon>Peloderinae</taxon>
        <taxon>Caenorhabditis</taxon>
    </lineage>
</organism>
<keyword id="KW-1003">Cell membrane</keyword>
<keyword id="KW-0325">Glycoprotein</keyword>
<keyword id="KW-0407">Ion channel</keyword>
<keyword id="KW-0406">Ion transport</keyword>
<keyword id="KW-0472">Membrane</keyword>
<keyword id="KW-0630">Potassium</keyword>
<keyword id="KW-0633">Potassium transport</keyword>
<keyword id="KW-1185">Reference proteome</keyword>
<keyword id="KW-0716">Sensory transduction</keyword>
<keyword id="KW-0915">Sodium</keyword>
<keyword id="KW-0894">Sodium channel</keyword>
<keyword id="KW-0739">Sodium transport</keyword>
<keyword id="KW-0812">Transmembrane</keyword>
<keyword id="KW-1133">Transmembrane helix</keyword>
<keyword id="KW-0813">Transport</keyword>
<accession>P34886</accession>
<accession>P37087</accession>
<protein>
    <recommendedName>
        <fullName>Degenerin mec-10</fullName>
    </recommendedName>
    <alternativeName>
        <fullName>Mechanosensory abnormality protein 10</fullName>
    </alternativeName>
</protein>
<sequence>MNRNPRMSKFQPNPRSRSRFQDETDLRSLRSFKTDFSNYLASDTNFLNVAEIMTSYAYGESNNAHEKEIQCDLLTENGGIEIDPTRLSYRERIRWHLQQFCYKTSSHGIPMLGQAPNSLYRAAWVFLLLICAIQFINQAVAVIQKYQKMDKITDIQLKFDTAPFPAITLCNLNPYKDSVIRSHDSISKILGVFKSVMKKAGDSSSEALEEEEETEYDMNGITIQAKRKKRGAGEKGTFEPANSACECDEEDGSNECEERSTEKPSGDNDMCICAFDRQTNDAWPCHRKEQWTNTTCQTCDEHYLCSKKAKKGTKRSELKKEPCICESKGLFCIKHEHAAMVLNLWEYFGDSEDFSEISTEEREALGFGNMTDEVAIVTKAKENIIFAMSALSEEQRILMSQAKHNLIHKCSFNGKPCDIDQDFELVADPTFGNCFVFNHDREIFKSSVRAGPQYGLRVMLFVNASDYLPTSEAVGIRLTIHDKDDFPFPDTFGYSAPTGYISSFGMRMKKMSRLPAPYGDCVEDGATSNYIYKGYAYSTEGCYRTCFQELIIDRCGCSDPRFPSIGGVQPCQVFNKNHRECLEKHTHQIGEIHGSFKCRCQQPCNQTIYTTSYSEAIWPSQALNISLGQCEKEAEECNEEYKENAAMLEVFYEALNFEVLSESEAYGIVKMMADFGGHLGLWSGVSVMTCCEFVCLAFELIYMAIAHHINQQRIRRRENAANEY</sequence>
<gene>
    <name evidence="9" type="primary">mec-10</name>
    <name evidence="9" type="ORF">F16F9.5</name>
</gene>
<comment type="function">
    <text evidence="3 4 5 6 7">Subunit of an amiloride-sensitive cation channel (degenerin channel complex) permeable for sodium, potassium, lithium and N-methylglucamine, and required for mechanosensory transduction (touch sensitivity) (PubMed:11875573, PubMed:12478294, PubMed:17261841, PubMed:7509039). Negatively regulates the turning step of male mating behavior (PubMed:17611271).</text>
</comment>
<comment type="subunit">
    <text evidence="3 4 7">Component of a non-voltage-gated amiloride-sensitive cation channel complex (also called the degenerin channel complex) composed of at least the mec-2, mec-4, mec-6 and mec-10 subunits; the complex mediates mechanotransduction in touch cells (PubMed:11875573, PubMed:12478294, PubMed:7509039). Interacts with mec-4 and mec-6 (PubMed:12478294).</text>
</comment>
<comment type="subcellular location">
    <subcellularLocation>
        <location evidence="3">Cell membrane</location>
        <topology evidence="3">Multi-pass membrane protein</topology>
    </subcellularLocation>
</comment>
<comment type="similarity">
    <text evidence="8">Belongs to the amiloride-sensitive sodium channel (TC 1.A.6) family.</text>
</comment>
<feature type="chain" id="PRO_0000181288" description="Degenerin mec-10">
    <location>
        <begin position="1"/>
        <end position="724"/>
    </location>
</feature>
<feature type="topological domain" description="Cytoplasmic" evidence="1">
    <location>
        <begin position="1"/>
        <end position="122"/>
    </location>
</feature>
<feature type="transmembrane region" description="Helical" evidence="1">
    <location>
        <begin position="123"/>
        <end position="143"/>
    </location>
</feature>
<feature type="topological domain" description="Extracellular" evidence="1">
    <location>
        <begin position="144"/>
        <end position="684"/>
    </location>
</feature>
<feature type="transmembrane region" description="Helical" evidence="1">
    <location>
        <begin position="685"/>
        <end position="705"/>
    </location>
</feature>
<feature type="topological domain" description="Cytoplasmic" evidence="1">
    <location>
        <begin position="706"/>
        <end position="724"/>
    </location>
</feature>
<feature type="region of interest" description="Disordered" evidence="2">
    <location>
        <begin position="1"/>
        <end position="22"/>
    </location>
</feature>
<feature type="region of interest" description="Disordered" evidence="2">
    <location>
        <begin position="229"/>
        <end position="265"/>
    </location>
</feature>
<feature type="compositionally biased region" description="Polar residues" evidence="2">
    <location>
        <begin position="1"/>
        <end position="15"/>
    </location>
</feature>
<feature type="compositionally biased region" description="Acidic residues" evidence="2">
    <location>
        <begin position="246"/>
        <end position="255"/>
    </location>
</feature>
<feature type="compositionally biased region" description="Basic and acidic residues" evidence="2">
    <location>
        <begin position="256"/>
        <end position="265"/>
    </location>
</feature>
<feature type="glycosylation site" description="N-linked (GlcNAc...) asparagine" evidence="1">
    <location>
        <position position="293"/>
    </location>
</feature>
<feature type="glycosylation site" description="N-linked (GlcNAc...) asparagine" evidence="1">
    <location>
        <position position="369"/>
    </location>
</feature>
<feature type="glycosylation site" description="N-linked (GlcNAc...) asparagine" evidence="1">
    <location>
        <position position="463"/>
    </location>
</feature>
<feature type="glycosylation site" description="N-linked (GlcNAc...) asparagine" evidence="1">
    <location>
        <position position="605"/>
    </location>
</feature>
<feature type="glycosylation site" description="N-linked (GlcNAc...) asparagine" evidence="1">
    <location>
        <position position="624"/>
    </location>
</feature>
<feature type="mutagenesis site" description="In e1515; loss of mechanosensory transduction between touch cells. Abnormal repetitive turning behavior during male mating." evidence="6 7">
    <original>S</original>
    <variation>F</variation>
    <location>
        <position position="105"/>
    </location>
</feature>
<feature type="mutagenesis site" description="Slight increase in channel current." evidence="5 7">
    <original>A</original>
    <variation>C</variation>
    <location>
        <position position="673"/>
    </location>
</feature>
<feature type="mutagenesis site" description="Increased channel current." evidence="5 7">
    <original>A</original>
    <variation>D</variation>
    <location>
        <position position="673"/>
    </location>
</feature>
<feature type="mutagenesis site" description="Causes degeneration of the PLM mechanosensory neuron and increases channel current." evidence="5 7">
    <original>A</original>
    <variation>V</variation>
    <location>
        <position position="673"/>
    </location>
</feature>
<reference key="1">
    <citation type="journal article" date="1994" name="Nature">
        <title>Gene interactions affecting mechanosensory transduction in Caenorhabditis elegans.</title>
        <authorList>
            <person name="Huang M."/>
            <person name="Chalfie M."/>
        </authorList>
    </citation>
    <scope>NUCLEOTIDE SEQUENCE [MRNA]</scope>
    <scope>FUNCTION</scope>
    <scope>SUBUNIT</scope>
    <scope>MUTAGENESIS OF SER-105 AND ALA-673</scope>
    <source>
        <strain>Bristol N2</strain>
    </source>
</reference>
<reference key="2">
    <citation type="journal article" date="1998" name="Science">
        <title>Genome sequence of the nematode C. elegans: a platform for investigating biology.</title>
        <authorList>
            <consortium name="The C. elegans sequencing consortium"/>
        </authorList>
    </citation>
    <scope>NUCLEOTIDE SEQUENCE [LARGE SCALE GENOMIC DNA]</scope>
    <source>
        <strain>Bristol N2</strain>
    </source>
</reference>
<reference key="3">
    <citation type="journal article" date="2002" name="Nature">
        <title>MEC-2 regulates C. elegans DEG/ENaC channels needed for mechanosensation.</title>
        <authorList>
            <person name="Goodman M.B."/>
            <person name="Ernstrom G.G."/>
            <person name="Chelur D.S."/>
            <person name="O'Hagan R."/>
            <person name="Yao C.A."/>
            <person name="Chalfie M."/>
        </authorList>
    </citation>
    <scope>FUNCTION</scope>
    <scope>SUBUNIT</scope>
    <scope>SUBCELLULAR LOCATION</scope>
</reference>
<reference key="4">
    <citation type="journal article" date="2002" name="Nature">
        <title>The mechanosensory protein MEC-6 is a subunit of the C. elegans touch-cell degenerin channel.</title>
        <authorList>
            <person name="Chelur D.S."/>
            <person name="Ernstrom G.G."/>
            <person name="Goodman M.B."/>
            <person name="Yao C.A."/>
            <person name="Chen L."/>
            <person name="O'Hagan R."/>
            <person name="Chalfie M."/>
        </authorList>
    </citation>
    <scope>FUNCTION</scope>
    <scope>IDENTIFICATION IN THE DEGENERIN CHANNEL COMPLEX</scope>
    <scope>INTERACTION WITH MEC-4 AND MEC-6</scope>
</reference>
<reference key="5">
    <citation type="journal article" date="2007" name="J. Gen. Physiol.">
        <title>Gain-of-function mutations in the MEC-4 DEG/ENaC sensory mechanotransduction channel alter gating and drug blockade.</title>
        <authorList>
            <person name="Brown A.L."/>
            <person name="Fernandez-Illescas S.M."/>
            <person name="Liao Z."/>
            <person name="Goodman M.B."/>
        </authorList>
    </citation>
    <scope>FUNCTION</scope>
    <scope>MUTAGENESIS OF ALA-673</scope>
</reference>
<reference key="6">
    <citation type="journal article" date="2007" name="J. Neurosci.">
        <title>FMRFamide-like neuropeptides and mechanosensory touch receptor neurons regulate male sexual turning behavior in Caenorhabditis elegans.</title>
        <authorList>
            <person name="Liu T."/>
            <person name="Kim K."/>
            <person name="Li C."/>
            <person name="Barr M.M."/>
        </authorList>
    </citation>
    <scope>FUNCTION</scope>
    <scope>MUTAGENESIS OF SER-105</scope>
</reference>
<evidence type="ECO:0000255" key="1"/>
<evidence type="ECO:0000256" key="2">
    <source>
        <dbReference type="SAM" id="MobiDB-lite"/>
    </source>
</evidence>
<evidence type="ECO:0000269" key="3">
    <source>
    </source>
</evidence>
<evidence type="ECO:0000269" key="4">
    <source>
    </source>
</evidence>
<evidence type="ECO:0000269" key="5">
    <source>
    </source>
</evidence>
<evidence type="ECO:0000269" key="6">
    <source>
    </source>
</evidence>
<evidence type="ECO:0000269" key="7">
    <source>
    </source>
</evidence>
<evidence type="ECO:0000305" key="8"/>
<evidence type="ECO:0000312" key="9">
    <source>
        <dbReference type="WormBase" id="F16F9.5"/>
    </source>
</evidence>
<proteinExistence type="evidence at protein level"/>
<dbReference type="EMBL" id="L25312">
    <property type="protein sequence ID" value="AAA17404.1"/>
    <property type="molecule type" value="mRNA"/>
</dbReference>
<dbReference type="EMBL" id="BX284606">
    <property type="protein sequence ID" value="CCD69038.1"/>
    <property type="molecule type" value="Genomic_DNA"/>
</dbReference>
<dbReference type="PIR" id="T25700">
    <property type="entry name" value="T25700"/>
</dbReference>
<dbReference type="RefSeq" id="NP_509438.1">
    <property type="nucleotide sequence ID" value="NM_077037.7"/>
</dbReference>
<dbReference type="SMR" id="P34886"/>
<dbReference type="BioGRID" id="46022">
    <property type="interactions" value="3"/>
</dbReference>
<dbReference type="FunCoup" id="P34886">
    <property type="interactions" value="28"/>
</dbReference>
<dbReference type="STRING" id="6239.F16F9.5.1"/>
<dbReference type="TCDB" id="1.A.6.2.2">
    <property type="family name" value="the epithelial na(+) channel (enac) family"/>
</dbReference>
<dbReference type="GlyCosmos" id="P34886">
    <property type="glycosylation" value="5 sites, No reported glycans"/>
</dbReference>
<dbReference type="PaxDb" id="6239-F16F9.5"/>
<dbReference type="EnsemblMetazoa" id="F16F9.5.1">
    <property type="protein sequence ID" value="F16F9.5.1"/>
    <property type="gene ID" value="WBGene00003174"/>
</dbReference>
<dbReference type="GeneID" id="181101"/>
<dbReference type="KEGG" id="cel:CELE_F16F9.5"/>
<dbReference type="UCSC" id="F16F9.5">
    <property type="organism name" value="c. elegans"/>
</dbReference>
<dbReference type="AGR" id="WB:WBGene00003174"/>
<dbReference type="CTD" id="181101"/>
<dbReference type="WormBase" id="F16F9.5">
    <property type="protein sequence ID" value="CE09444"/>
    <property type="gene ID" value="WBGene00003174"/>
    <property type="gene designation" value="mec-10"/>
</dbReference>
<dbReference type="eggNOG" id="KOG4294">
    <property type="taxonomic scope" value="Eukaryota"/>
</dbReference>
<dbReference type="GeneTree" id="ENSGT00970000196327"/>
<dbReference type="HOGENOM" id="CLU_017673_0_0_1"/>
<dbReference type="InParanoid" id="P34886"/>
<dbReference type="OMA" id="MSQAKHN"/>
<dbReference type="OrthoDB" id="5874059at2759"/>
<dbReference type="PhylomeDB" id="P34886"/>
<dbReference type="Reactome" id="R-CEL-2672351">
    <property type="pathway name" value="Stimuli-sensing channels"/>
</dbReference>
<dbReference type="Reactome" id="R-CEL-9730628">
    <property type="pathway name" value="Sensory perception of salty taste"/>
</dbReference>
<dbReference type="PRO" id="PR:P34886"/>
<dbReference type="Proteomes" id="UP000001940">
    <property type="component" value="Chromosome X"/>
</dbReference>
<dbReference type="Bgee" id="WBGene00003174">
    <property type="expression patterns" value="Expressed in larva and 1 other cell type or tissue"/>
</dbReference>
<dbReference type="GO" id="GO:0044298">
    <property type="term" value="C:cell body membrane"/>
    <property type="evidence" value="ECO:0000314"/>
    <property type="project" value="UniProtKB"/>
</dbReference>
<dbReference type="GO" id="GO:0005886">
    <property type="term" value="C:plasma membrane"/>
    <property type="evidence" value="ECO:0000318"/>
    <property type="project" value="GO_Central"/>
</dbReference>
<dbReference type="GO" id="GO:0015280">
    <property type="term" value="F:ligand-gated sodium channel activity"/>
    <property type="evidence" value="ECO:0000314"/>
    <property type="project" value="WormBase"/>
</dbReference>
<dbReference type="GO" id="GO:0050976">
    <property type="term" value="P:detection of mechanical stimulus involved in sensory perception of touch"/>
    <property type="evidence" value="ECO:0000316"/>
    <property type="project" value="UniProtKB"/>
</dbReference>
<dbReference type="GO" id="GO:0007638">
    <property type="term" value="P:mechanosensory behavior"/>
    <property type="evidence" value="ECO:0000315"/>
    <property type="project" value="WormBase"/>
</dbReference>
<dbReference type="GO" id="GO:1905789">
    <property type="term" value="P:positive regulation of detection of mechanical stimulus involved in sensory perception of touch"/>
    <property type="evidence" value="ECO:0000316"/>
    <property type="project" value="UniProtKB"/>
</dbReference>
<dbReference type="GO" id="GO:1905792">
    <property type="term" value="P:positive regulation of mechanosensory behavior"/>
    <property type="evidence" value="ECO:0000316"/>
    <property type="project" value="UniProtKB"/>
</dbReference>
<dbReference type="GO" id="GO:0006813">
    <property type="term" value="P:potassium ion transport"/>
    <property type="evidence" value="ECO:0007669"/>
    <property type="project" value="UniProtKB-KW"/>
</dbReference>
<dbReference type="GO" id="GO:0009612">
    <property type="term" value="P:response to mechanical stimulus"/>
    <property type="evidence" value="ECO:0000315"/>
    <property type="project" value="WormBase"/>
</dbReference>
<dbReference type="GO" id="GO:0035725">
    <property type="term" value="P:sodium ion transmembrane transport"/>
    <property type="evidence" value="ECO:0000318"/>
    <property type="project" value="GO_Central"/>
</dbReference>
<dbReference type="FunFam" id="1.10.287.770:FF:000001">
    <property type="entry name" value="Acid-sensing ion channel subunit 1"/>
    <property type="match status" value="1"/>
</dbReference>
<dbReference type="FunFam" id="2.60.470.10:FF:000004">
    <property type="entry name" value="Degenerin unc-8"/>
    <property type="match status" value="1"/>
</dbReference>
<dbReference type="Gene3D" id="2.60.470.10">
    <property type="entry name" value="Acid-sensing ion channels like domains"/>
    <property type="match status" value="1"/>
</dbReference>
<dbReference type="Gene3D" id="1.10.287.770">
    <property type="entry name" value="YojJ-like"/>
    <property type="match status" value="1"/>
</dbReference>
<dbReference type="InterPro" id="IPR004726">
    <property type="entry name" value="Deg-1"/>
</dbReference>
<dbReference type="InterPro" id="IPR001873">
    <property type="entry name" value="ENaC"/>
</dbReference>
<dbReference type="InterPro" id="IPR020903">
    <property type="entry name" value="ENaC_CS"/>
</dbReference>
<dbReference type="InterPro" id="IPR054001">
    <property type="entry name" value="Mec-4/10_cyt"/>
</dbReference>
<dbReference type="NCBIfam" id="TIGR00867">
    <property type="entry name" value="deg-1"/>
    <property type="match status" value="1"/>
</dbReference>
<dbReference type="PANTHER" id="PTHR11690">
    <property type="entry name" value="AMILORIDE-SENSITIVE SODIUM CHANNEL-RELATED"/>
    <property type="match status" value="1"/>
</dbReference>
<dbReference type="PANTHER" id="PTHR11690:SF267">
    <property type="entry name" value="DEGENERIN MEC-10"/>
    <property type="match status" value="1"/>
</dbReference>
<dbReference type="Pfam" id="PF00858">
    <property type="entry name" value="ASC"/>
    <property type="match status" value="1"/>
</dbReference>
<dbReference type="Pfam" id="PF22214">
    <property type="entry name" value="Mec-4_10_cyt"/>
    <property type="match status" value="1"/>
</dbReference>
<dbReference type="PRINTS" id="PR01078">
    <property type="entry name" value="AMINACHANNEL"/>
</dbReference>
<dbReference type="PROSITE" id="PS01206">
    <property type="entry name" value="ASC"/>
    <property type="match status" value="1"/>
</dbReference>